<accession>Q9Y6R9</accession>
<accession>C8CAP4</accession>
<accession>Q9HDB6</accession>
<gene>
    <name evidence="11" type="primary">CCDC61</name>
</gene>
<organism>
    <name type="scientific">Homo sapiens</name>
    <name type="common">Human</name>
    <dbReference type="NCBI Taxonomy" id="9606"/>
    <lineage>
        <taxon>Eukaryota</taxon>
        <taxon>Metazoa</taxon>
        <taxon>Chordata</taxon>
        <taxon>Craniata</taxon>
        <taxon>Vertebrata</taxon>
        <taxon>Euteleostomi</taxon>
        <taxon>Mammalia</taxon>
        <taxon>Eutheria</taxon>
        <taxon>Euarchontoglires</taxon>
        <taxon>Primates</taxon>
        <taxon>Haplorrhini</taxon>
        <taxon>Catarrhini</taxon>
        <taxon>Hominidae</taxon>
        <taxon>Homo</taxon>
    </lineage>
</organism>
<keyword id="KW-0002">3D-structure</keyword>
<keyword id="KW-0007">Acetylation</keyword>
<keyword id="KW-0025">Alternative splicing</keyword>
<keyword id="KW-0966">Cell projection</keyword>
<keyword id="KW-0970">Cilium biogenesis/degradation</keyword>
<keyword id="KW-0175">Coiled coil</keyword>
<keyword id="KW-0963">Cytoplasm</keyword>
<keyword id="KW-0206">Cytoskeleton</keyword>
<keyword id="KW-0597">Phosphoprotein</keyword>
<keyword id="KW-1267">Proteomics identification</keyword>
<keyword id="KW-1185">Reference proteome</keyword>
<comment type="function">
    <text evidence="3 4 5">Microtubule-binding centrosomal protein required for centriole cohesion, independently of the centrosome-associated protein/CEP250 and rootletin/CROCC linker (PubMed:31789463). In interphase, required for anchoring microtubule at the mother centriole subdistal appendages and for centrosome positioning (PubMed:31789463). During mitosis, may be involved in spindle assembly and chromatin alignment by regulating the organization of spindle microtubules into a symmetrical structure (PubMed:30354798). Has been proposed to play a role in CEP170 recruitment to centrosomes (PubMed:30354798). However, this function could not be confirmed (PubMed:31789463). Plays a non-essential role in ciliogenesis (PubMed:31789463, PubMed:32375023).</text>
</comment>
<comment type="subunit">
    <text evidence="3 4 5">Forms homodimers (via head domain) (PubMed:32375023). Interacts with CEP170 (PubMed:30354798, PubMed:31789463). Interacts with PCM1 and CEP131 (PubMed:31789463). Binds tubulin (PubMed:31789463).</text>
</comment>
<comment type="interaction">
    <interactant intactId="EBI-10961230">
        <id>Q9Y6R9</id>
    </interactant>
    <interactant intactId="EBI-1104799">
        <id>Q5SW79</id>
        <label>CEP170</label>
    </interactant>
    <organismsDiffer>false</organismsDiffer>
    <experiments>3</experiments>
</comment>
<comment type="subcellular location">
    <subcellularLocation>
        <location evidence="3 4">Cytoplasm</location>
        <location evidence="3 4">Cytoskeleton</location>
        <location evidence="3 4">Microtubule organizing center</location>
        <location evidence="3 4">Centrosome</location>
    </subcellularLocation>
    <subcellularLocation>
        <location evidence="3 4">Cytoplasm</location>
        <location evidence="3 4">Cytoskeleton</location>
        <location evidence="3 4">Microtubule organizing center</location>
        <location evidence="3 4">Centrosome</location>
        <location evidence="3 4">Centriolar satellite</location>
    </subcellularLocation>
    <subcellularLocation>
        <location evidence="5">Cytoplasm</location>
        <location evidence="5">Cytoskeleton</location>
        <location evidence="5">Cilium basal body</location>
    </subcellularLocation>
    <text evidence="3 4">Localization at the centriolar satellite is dependent on intact microtubule network (PubMed:30354798). Localizes at the centriole subdistal appendages and proximal ends (PubMed:31789463). Localized to centrosomal/satellite-like structures with the onset of centrosome separation in early G2 (PubMed:30354798).</text>
</comment>
<comment type="alternative products">
    <event type="alternative splicing"/>
    <isoform>
        <id>Q9Y6R9-1</id>
        <name>1</name>
        <sequence type="displayed"/>
    </isoform>
    <isoform>
        <id>Q9Y6R9-2</id>
        <name>2</name>
        <sequence type="described" ref="VSP_053741"/>
    </isoform>
</comment>
<comment type="domain">
    <text evidence="5">The coiled-coil domains are involved in microtubule-binding.</text>
</comment>
<comment type="miscellaneous">
    <text evidence="5">The N-terminal 3D structure (head domain) resembles that of NHEJ1/XLF, PAXX, SASS6 and XRCC4.</text>
</comment>
<comment type="similarity">
    <text evidence="10">Belongs to the CCDC61 family.</text>
</comment>
<comment type="sequence caution" evidence="10">
    <conflict type="erroneous gene model prediction">
        <sequence resource="EMBL-CDS" id="AAD38244"/>
    </conflict>
</comment>
<comment type="sequence caution" evidence="10">
    <conflict type="erroneous initiation">
        <sequence resource="EMBL-CDS" id="AAD38244"/>
    </conflict>
    <text>Extended N-terminus.</text>
</comment>
<comment type="sequence caution" evidence="10">
    <conflict type="erroneous initiation">
        <sequence resource="EMBL-CDS" id="AAF98366"/>
    </conflict>
    <text>Extended N-terminus.</text>
</comment>
<feature type="chain" id="PRO_0000311255" description="Centrosomal protein CCDC61">
    <location>
        <begin position="1"/>
        <end position="512"/>
    </location>
</feature>
<feature type="region of interest" description="Head domain" evidence="8">
    <location>
        <begin position="1"/>
        <end position="143"/>
    </location>
</feature>
<feature type="region of interest" description="Disordered" evidence="2">
    <location>
        <begin position="276"/>
        <end position="477"/>
    </location>
</feature>
<feature type="coiled-coil region" evidence="1">
    <location>
        <begin position="178"/>
        <end position="205"/>
    </location>
</feature>
<feature type="coiled-coil region" evidence="1">
    <location>
        <begin position="248"/>
        <end position="275"/>
    </location>
</feature>
<feature type="compositionally biased region" description="Basic and acidic residues" evidence="2">
    <location>
        <begin position="293"/>
        <end position="306"/>
    </location>
</feature>
<feature type="compositionally biased region" description="Low complexity" evidence="2">
    <location>
        <begin position="407"/>
        <end position="425"/>
    </location>
</feature>
<feature type="modified residue" description="N-acetylmethionine" evidence="16">
    <location>
        <position position="1"/>
    </location>
</feature>
<feature type="modified residue" description="Phosphothreonine" evidence="18">
    <location>
        <position position="285"/>
    </location>
</feature>
<feature type="modified residue" description="Phosphoserine" evidence="17">
    <location>
        <position position="334"/>
    </location>
</feature>
<feature type="modified residue" description="Phosphoserine" evidence="17">
    <location>
        <position position="336"/>
    </location>
</feature>
<feature type="modified residue" description="Phosphoserine" evidence="12 13 14 15 17 18">
    <location>
        <position position="373"/>
    </location>
</feature>
<feature type="modified residue" description="Phosphoserine" evidence="12 13 14 15 17 18">
    <location>
        <position position="376"/>
    </location>
</feature>
<feature type="modified residue" description="Phosphoserine" evidence="17">
    <location>
        <position position="447"/>
    </location>
</feature>
<feature type="modified residue" description="Phosphoserine" evidence="17">
    <location>
        <position position="473"/>
    </location>
</feature>
<feature type="splice variant" id="VSP_053741" description="In isoform 2." evidence="9">
    <location>
        <begin position="185"/>
        <end position="364"/>
    </location>
</feature>
<feature type="mutagenesis site" description="Loss of dimerization." evidence="5">
    <original>FD</original>
    <variation>EA</variation>
    <location>
        <begin position="128"/>
        <end position="129"/>
    </location>
</feature>
<feature type="mutagenesis site" description="Loss of microtubule-binding; when associated with E-263, E-266, E-268 and E-270." evidence="5">
    <original>K</original>
    <variation>E</variation>
    <location>
        <position position="259"/>
    </location>
</feature>
<feature type="mutagenesis site" description="Loss of microtubule-binding; when associated with E-259, E-266, E-268 and E-270." evidence="5">
    <original>R</original>
    <variation>E</variation>
    <location>
        <position position="263"/>
    </location>
</feature>
<feature type="mutagenesis site" description="Loss of microtubule-binding; when associated with E-259, E-263, E-268 and E-270." evidence="5">
    <original>R</original>
    <variation>E</variation>
    <location>
        <position position="266"/>
    </location>
</feature>
<feature type="mutagenesis site" description="Loss of microtubule-binding; when associated with E-259, E-263, E-266 and E-270." evidence="5">
    <original>R</original>
    <variation>E</variation>
    <location>
        <position position="268"/>
    </location>
</feature>
<feature type="mutagenesis site" description="Loss of microtubule-binding; when associated with E-259, E-263, E-266 and E-268." evidence="5">
    <original>K</original>
    <variation>E</variation>
    <location>
        <position position="270"/>
    </location>
</feature>
<feature type="sequence conflict" description="In Ref. 1; ACT79331." evidence="10" ref="1">
    <original>Q</original>
    <variation>R</variation>
    <location>
        <position position="389"/>
    </location>
</feature>
<feature type="sequence conflict" description="In Ref. 1; ACT79331." evidence="10" ref="1">
    <original>P</original>
    <variation>L</variation>
    <location>
        <position position="459"/>
    </location>
</feature>
<feature type="strand" evidence="19">
    <location>
        <begin position="7"/>
        <end position="13"/>
    </location>
</feature>
<feature type="strand" evidence="19">
    <location>
        <begin position="16"/>
        <end position="25"/>
    </location>
</feature>
<feature type="strand" evidence="19">
    <location>
        <begin position="28"/>
        <end position="35"/>
    </location>
</feature>
<feature type="turn" evidence="19">
    <location>
        <begin position="36"/>
        <end position="39"/>
    </location>
</feature>
<feature type="strand" evidence="19">
    <location>
        <begin position="40"/>
        <end position="47"/>
    </location>
</feature>
<feature type="helix" evidence="19">
    <location>
        <begin position="48"/>
        <end position="57"/>
    </location>
</feature>
<feature type="helix" evidence="19">
    <location>
        <begin position="64"/>
        <end position="76"/>
    </location>
</feature>
<feature type="strand" evidence="19">
    <location>
        <begin position="80"/>
        <end position="87"/>
    </location>
</feature>
<feature type="helix" evidence="19">
    <location>
        <begin position="89"/>
        <end position="95"/>
    </location>
</feature>
<feature type="strand" evidence="19">
    <location>
        <begin position="118"/>
        <end position="126"/>
    </location>
</feature>
<feature type="strand" evidence="19">
    <location>
        <begin position="129"/>
        <end position="137"/>
    </location>
</feature>
<proteinExistence type="evidence at protein level"/>
<sequence>MDQPAGLQVDYVFRGVEHAVRVMVSGQVLELEVEDRMTADQWRGEFDAGFIEDLTHKTGNFKQFNIFCHMLESALTQSSESVTLDLLTYTDLESLRNRKMGGRPGSLAPRSAQLNSKRYLILIYSVEFDRIHYPLPLPYQGKPDPVVLQGIIRSLKEELGRLQGLDGQNTRDTRENEIWHLREQVSRLASEKRELEAQLGRSREEALAGRAARQEAEALRGLVRGLELELRQERGLGHRVAGRRGQDCRRLAKELEEAKASERSLRARLKTLTSELALYKRGRRTPPVQPPPTREDRASSSRERSASRGRGAARSSSRESGRGSRGRGRPARPSPSPTGGRALRFDPTAFVKAKERKQREIQMKQQQRNRLGSGGSGDGPSVSWSRQTQPPAALTGRGDAPNRSRNRSSSVDSFRSRCSSASSCSDLEDFSESLSRGGHRRRGKPPSPTPWSGSNMKSPPVERSHHQKSLANSGGWVPIKEYSSEHQAADMAEIDARLKALQEYMNRLDMRS</sequence>
<dbReference type="EMBL" id="GQ375050">
    <property type="protein sequence ID" value="ACT79331.1"/>
    <property type="molecule type" value="mRNA"/>
</dbReference>
<dbReference type="EMBL" id="AC007785">
    <property type="protein sequence ID" value="AAD38244.1"/>
    <property type="status" value="ALT_SEQ"/>
    <property type="molecule type" value="Genomic_DNA"/>
</dbReference>
<dbReference type="EMBL" id="AC011545">
    <property type="protein sequence ID" value="AAF98366.1"/>
    <property type="status" value="ALT_INIT"/>
    <property type="molecule type" value="Genomic_DNA"/>
</dbReference>
<dbReference type="CCDS" id="CCDS46120.2">
    <molecule id="Q9Y6R9-1"/>
</dbReference>
<dbReference type="RefSeq" id="NP_001254652.1">
    <molecule id="Q9Y6R9-1"/>
    <property type="nucleotide sequence ID" value="NM_001267723.2"/>
</dbReference>
<dbReference type="RefSeq" id="XP_005259249.1">
    <property type="nucleotide sequence ID" value="XM_005259192.4"/>
</dbReference>
<dbReference type="RefSeq" id="XP_011525559.1">
    <property type="nucleotide sequence ID" value="XM_011527257.2"/>
</dbReference>
<dbReference type="PDB" id="6HXT">
    <property type="method" value="X-ray"/>
    <property type="resolution" value="2.55 A"/>
    <property type="chains" value="A/B/C=1-143"/>
</dbReference>
<dbReference type="PDBsum" id="6HXT"/>
<dbReference type="SMR" id="Q9Y6R9"/>
<dbReference type="BioGRID" id="609841">
    <property type="interactions" value="44"/>
</dbReference>
<dbReference type="FunCoup" id="Q9Y6R9">
    <property type="interactions" value="716"/>
</dbReference>
<dbReference type="IntAct" id="Q9Y6R9">
    <property type="interactions" value="60"/>
</dbReference>
<dbReference type="MINT" id="Q9Y6R9"/>
<dbReference type="STRING" id="9606.ENSP00000471454"/>
<dbReference type="GlyGen" id="Q9Y6R9">
    <property type="glycosylation" value="4 sites, 1 O-linked glycan (3 sites)"/>
</dbReference>
<dbReference type="iPTMnet" id="Q9Y6R9"/>
<dbReference type="PhosphoSitePlus" id="Q9Y6R9"/>
<dbReference type="BioMuta" id="CCDC61"/>
<dbReference type="DMDM" id="160380583"/>
<dbReference type="jPOST" id="Q9Y6R9"/>
<dbReference type="MassIVE" id="Q9Y6R9"/>
<dbReference type="PaxDb" id="9606-ENSP00000471454"/>
<dbReference type="PeptideAtlas" id="Q9Y6R9"/>
<dbReference type="ProteomicsDB" id="86781">
    <molecule id="Q9Y6R9-1"/>
</dbReference>
<dbReference type="Pumba" id="Q9Y6R9"/>
<dbReference type="Antibodypedia" id="49264">
    <property type="antibodies" value="119 antibodies from 18 providers"/>
</dbReference>
<dbReference type="DNASU" id="729440"/>
<dbReference type="Ensembl" id="ENST00000536603.5">
    <molecule id="Q9Y6R9-2"/>
    <property type="protein sequence ID" value="ENSP00000444279.1"/>
    <property type="gene ID" value="ENSG00000104983.8"/>
</dbReference>
<dbReference type="Ensembl" id="ENST00000594087.1">
    <molecule id="Q9Y6R9-2"/>
    <property type="protein sequence ID" value="ENSP00000469466.1"/>
    <property type="gene ID" value="ENSG00000104983.8"/>
</dbReference>
<dbReference type="Ensembl" id="ENST00000595358.5">
    <molecule id="Q9Y6R9-1"/>
    <property type="protein sequence ID" value="ENSP00000471454.1"/>
    <property type="gene ID" value="ENSG00000104983.8"/>
</dbReference>
<dbReference type="GeneID" id="729440"/>
<dbReference type="KEGG" id="hsa:729440"/>
<dbReference type="MANE-Select" id="ENST00000595358.5">
    <property type="protein sequence ID" value="ENSP00000471454.1"/>
    <property type="RefSeq nucleotide sequence ID" value="NM_001267723.2"/>
    <property type="RefSeq protein sequence ID" value="NP_001254652.1"/>
</dbReference>
<dbReference type="UCSC" id="uc021uwd.3">
    <molecule id="Q9Y6R9-1"/>
    <property type="organism name" value="human"/>
</dbReference>
<dbReference type="AGR" id="HGNC:33629"/>
<dbReference type="CTD" id="729440"/>
<dbReference type="DisGeNET" id="729440"/>
<dbReference type="GeneCards" id="CCDC61"/>
<dbReference type="HGNC" id="HGNC:33629">
    <property type="gene designation" value="CCDC61"/>
</dbReference>
<dbReference type="HPA" id="ENSG00000104983">
    <property type="expression patterns" value="Low tissue specificity"/>
</dbReference>
<dbReference type="MIM" id="620676">
    <property type="type" value="gene"/>
</dbReference>
<dbReference type="neXtProt" id="NX_Q9Y6R9"/>
<dbReference type="OpenTargets" id="ENSG00000104983"/>
<dbReference type="VEuPathDB" id="HostDB:ENSG00000104983"/>
<dbReference type="eggNOG" id="ENOG502QRAS">
    <property type="taxonomic scope" value="Eukaryota"/>
</dbReference>
<dbReference type="GeneTree" id="ENSGT00940000154133"/>
<dbReference type="HOGENOM" id="CLU_038746_1_0_1"/>
<dbReference type="InParanoid" id="Q9Y6R9"/>
<dbReference type="OMA" id="PMKEYSS"/>
<dbReference type="OrthoDB" id="568137at2759"/>
<dbReference type="PAN-GO" id="Q9Y6R9">
    <property type="GO annotations" value="1 GO annotation based on evolutionary models"/>
</dbReference>
<dbReference type="TreeFam" id="TF329415"/>
<dbReference type="PathwayCommons" id="Q9Y6R9"/>
<dbReference type="SignaLink" id="Q9Y6R9"/>
<dbReference type="BioGRID-ORCS" id="729440">
    <property type="hits" value="16 hits in 1151 CRISPR screens"/>
</dbReference>
<dbReference type="ChiTaRS" id="CCDC61">
    <property type="organism name" value="human"/>
</dbReference>
<dbReference type="GenomeRNAi" id="729440"/>
<dbReference type="Pharos" id="Q9Y6R9">
    <property type="development level" value="Tdark"/>
</dbReference>
<dbReference type="PRO" id="PR:Q9Y6R9"/>
<dbReference type="Proteomes" id="UP000005640">
    <property type="component" value="Chromosome 19"/>
</dbReference>
<dbReference type="RNAct" id="Q9Y6R9">
    <property type="molecule type" value="protein"/>
</dbReference>
<dbReference type="Bgee" id="ENSG00000104983">
    <property type="expression patterns" value="Expressed in right uterine tube and 105 other cell types or tissues"/>
</dbReference>
<dbReference type="ExpressionAtlas" id="Q9Y6R9">
    <property type="expression patterns" value="baseline and differential"/>
</dbReference>
<dbReference type="GO" id="GO:0034451">
    <property type="term" value="C:centriolar satellite"/>
    <property type="evidence" value="ECO:0000314"/>
    <property type="project" value="UniProtKB"/>
</dbReference>
<dbReference type="GO" id="GO:0120103">
    <property type="term" value="C:centriolar subdistal appendage"/>
    <property type="evidence" value="ECO:0000314"/>
    <property type="project" value="UniProtKB"/>
</dbReference>
<dbReference type="GO" id="GO:0005813">
    <property type="term" value="C:centrosome"/>
    <property type="evidence" value="ECO:0000314"/>
    <property type="project" value="UniProtKB"/>
</dbReference>
<dbReference type="GO" id="GO:0036064">
    <property type="term" value="C:ciliary basal body"/>
    <property type="evidence" value="ECO:0000314"/>
    <property type="project" value="UniProtKB"/>
</dbReference>
<dbReference type="GO" id="GO:0005737">
    <property type="term" value="C:cytoplasm"/>
    <property type="evidence" value="ECO:0007669"/>
    <property type="project" value="UniProtKB-KW"/>
</dbReference>
<dbReference type="GO" id="GO:0005815">
    <property type="term" value="C:microtubule organizing center"/>
    <property type="evidence" value="ECO:0000314"/>
    <property type="project" value="UniProtKB"/>
</dbReference>
<dbReference type="GO" id="GO:0042802">
    <property type="term" value="F:identical protein binding"/>
    <property type="evidence" value="ECO:0000315"/>
    <property type="project" value="UniProtKB"/>
</dbReference>
<dbReference type="GO" id="GO:0008017">
    <property type="term" value="F:microtubule binding"/>
    <property type="evidence" value="ECO:0000315"/>
    <property type="project" value="UniProtKB"/>
</dbReference>
<dbReference type="GO" id="GO:0030030">
    <property type="term" value="P:cell projection organization"/>
    <property type="evidence" value="ECO:0007669"/>
    <property type="project" value="UniProtKB-KW"/>
</dbReference>
<dbReference type="GO" id="GO:0098534">
    <property type="term" value="P:centriole assembly"/>
    <property type="evidence" value="ECO:0000314"/>
    <property type="project" value="UniProtKB"/>
</dbReference>
<dbReference type="GO" id="GO:0090307">
    <property type="term" value="P:mitotic spindle assembly"/>
    <property type="evidence" value="ECO:0000314"/>
    <property type="project" value="UniProtKB"/>
</dbReference>
<dbReference type="CDD" id="cd22284">
    <property type="entry name" value="HD_CCDC61_N"/>
    <property type="match status" value="1"/>
</dbReference>
<dbReference type="FunFam" id="1.20.5.1160:FF:000021">
    <property type="entry name" value="Coiled-coil domain-containing protein 61 isoform X1"/>
    <property type="match status" value="1"/>
</dbReference>
<dbReference type="Gene3D" id="1.20.5.1160">
    <property type="entry name" value="Vasodilator-stimulated phosphoprotein"/>
    <property type="match status" value="1"/>
</dbReference>
<dbReference type="InterPro" id="IPR049733">
    <property type="entry name" value="CCDC61_N"/>
</dbReference>
<dbReference type="PANTHER" id="PTHR22691:SF1">
    <property type="entry name" value="CENTROSOMAL PROTEIN CCDC61"/>
    <property type="match status" value="1"/>
</dbReference>
<dbReference type="PANTHER" id="PTHR22691">
    <property type="entry name" value="YEAST SPT2-RELATED"/>
    <property type="match status" value="1"/>
</dbReference>
<evidence type="ECO:0000255" key="1"/>
<evidence type="ECO:0000256" key="2">
    <source>
        <dbReference type="SAM" id="MobiDB-lite"/>
    </source>
</evidence>
<evidence type="ECO:0000269" key="3">
    <source>
    </source>
</evidence>
<evidence type="ECO:0000269" key="4">
    <source>
    </source>
</evidence>
<evidence type="ECO:0000269" key="5">
    <source>
    </source>
</evidence>
<evidence type="ECO:0000303" key="6">
    <source>
    </source>
</evidence>
<evidence type="ECO:0000303" key="7">
    <source>
    </source>
</evidence>
<evidence type="ECO:0000303" key="8">
    <source>
    </source>
</evidence>
<evidence type="ECO:0000303" key="9">
    <source ref="1"/>
</evidence>
<evidence type="ECO:0000305" key="10"/>
<evidence type="ECO:0000312" key="11">
    <source>
        <dbReference type="HGNC" id="HGNC:33629"/>
    </source>
</evidence>
<evidence type="ECO:0007744" key="12">
    <source>
    </source>
</evidence>
<evidence type="ECO:0007744" key="13">
    <source>
    </source>
</evidence>
<evidence type="ECO:0007744" key="14">
    <source>
    </source>
</evidence>
<evidence type="ECO:0007744" key="15">
    <source>
    </source>
</evidence>
<evidence type="ECO:0007744" key="16">
    <source>
    </source>
</evidence>
<evidence type="ECO:0007744" key="17">
    <source>
    </source>
</evidence>
<evidence type="ECO:0007744" key="18">
    <source>
    </source>
</evidence>
<evidence type="ECO:0007829" key="19">
    <source>
        <dbReference type="PDB" id="6HXT"/>
    </source>
</evidence>
<name>CCD61_HUMAN</name>
<reference key="1">
    <citation type="submission" date="2009-07" db="EMBL/GenBank/DDBJ databases">
        <title>The Chlamydomonas VFL3 gene is essential for probasal body positioning and segregation.</title>
        <authorList>
            <person name="Iyadurai K.B."/>
            <person name="Piasecki B.P."/>
            <person name="LaVoie M."/>
            <person name="Sislo R."/>
            <person name="Silflow C.D."/>
        </authorList>
    </citation>
    <scope>NUCLEOTIDE SEQUENCE [MRNA] (ISOFORM 2)</scope>
</reference>
<reference key="2">
    <citation type="journal article" date="2004" name="Nature">
        <title>The DNA sequence and biology of human chromosome 19.</title>
        <authorList>
            <person name="Grimwood J."/>
            <person name="Gordon L.A."/>
            <person name="Olsen A.S."/>
            <person name="Terry A."/>
            <person name="Schmutz J."/>
            <person name="Lamerdin J.E."/>
            <person name="Hellsten U."/>
            <person name="Goodstein D."/>
            <person name="Couronne O."/>
            <person name="Tran-Gyamfi M."/>
            <person name="Aerts A."/>
            <person name="Altherr M."/>
            <person name="Ashworth L."/>
            <person name="Bajorek E."/>
            <person name="Black S."/>
            <person name="Branscomb E."/>
            <person name="Caenepeel S."/>
            <person name="Carrano A.V."/>
            <person name="Caoile C."/>
            <person name="Chan Y.M."/>
            <person name="Christensen M."/>
            <person name="Cleland C.A."/>
            <person name="Copeland A."/>
            <person name="Dalin E."/>
            <person name="Dehal P."/>
            <person name="Denys M."/>
            <person name="Detter J.C."/>
            <person name="Escobar J."/>
            <person name="Flowers D."/>
            <person name="Fotopulos D."/>
            <person name="Garcia C."/>
            <person name="Georgescu A.M."/>
            <person name="Glavina T."/>
            <person name="Gomez M."/>
            <person name="Gonzales E."/>
            <person name="Groza M."/>
            <person name="Hammon N."/>
            <person name="Hawkins T."/>
            <person name="Haydu L."/>
            <person name="Ho I."/>
            <person name="Huang W."/>
            <person name="Israni S."/>
            <person name="Jett J."/>
            <person name="Kadner K."/>
            <person name="Kimball H."/>
            <person name="Kobayashi A."/>
            <person name="Larionov V."/>
            <person name="Leem S.-H."/>
            <person name="Lopez F."/>
            <person name="Lou Y."/>
            <person name="Lowry S."/>
            <person name="Malfatti S."/>
            <person name="Martinez D."/>
            <person name="McCready P.M."/>
            <person name="Medina C."/>
            <person name="Morgan J."/>
            <person name="Nelson K."/>
            <person name="Nolan M."/>
            <person name="Ovcharenko I."/>
            <person name="Pitluck S."/>
            <person name="Pollard M."/>
            <person name="Popkie A.P."/>
            <person name="Predki P."/>
            <person name="Quan G."/>
            <person name="Ramirez L."/>
            <person name="Rash S."/>
            <person name="Retterer J."/>
            <person name="Rodriguez A."/>
            <person name="Rogers S."/>
            <person name="Salamov A."/>
            <person name="Salazar A."/>
            <person name="She X."/>
            <person name="Smith D."/>
            <person name="Slezak T."/>
            <person name="Solovyev V."/>
            <person name="Thayer N."/>
            <person name="Tice H."/>
            <person name="Tsai M."/>
            <person name="Ustaszewska A."/>
            <person name="Vo N."/>
            <person name="Wagner M."/>
            <person name="Wheeler J."/>
            <person name="Wu K."/>
            <person name="Xie G."/>
            <person name="Yang J."/>
            <person name="Dubchak I."/>
            <person name="Furey T.S."/>
            <person name="DeJong P."/>
            <person name="Dickson M."/>
            <person name="Gordon D."/>
            <person name="Eichler E.E."/>
            <person name="Pennacchio L.A."/>
            <person name="Richardson P."/>
            <person name="Stubbs L."/>
            <person name="Rokhsar D.S."/>
            <person name="Myers R.M."/>
            <person name="Rubin E.M."/>
            <person name="Lucas S.M."/>
        </authorList>
    </citation>
    <scope>NUCLEOTIDE SEQUENCE [LARGE SCALE GENOMIC DNA]</scope>
</reference>
<reference key="3">
    <citation type="journal article" date="2006" name="Cell">
        <title>Global, in vivo, and site-specific phosphorylation dynamics in signaling networks.</title>
        <authorList>
            <person name="Olsen J.V."/>
            <person name="Blagoev B."/>
            <person name="Gnad F."/>
            <person name="Macek B."/>
            <person name="Kumar C."/>
            <person name="Mortensen P."/>
            <person name="Mann M."/>
        </authorList>
    </citation>
    <scope>PHOSPHORYLATION [LARGE SCALE ANALYSIS] AT SER-373 AND SER-376</scope>
    <scope>IDENTIFICATION BY MASS SPECTROMETRY [LARGE SCALE ANALYSIS]</scope>
    <source>
        <tissue>Cervix carcinoma</tissue>
    </source>
</reference>
<reference key="4">
    <citation type="journal article" date="2009" name="Anal. Chem.">
        <title>Lys-N and trypsin cover complementary parts of the phosphoproteome in a refined SCX-based approach.</title>
        <authorList>
            <person name="Gauci S."/>
            <person name="Helbig A.O."/>
            <person name="Slijper M."/>
            <person name="Krijgsveld J."/>
            <person name="Heck A.J."/>
            <person name="Mohammed S."/>
        </authorList>
    </citation>
    <scope>IDENTIFICATION BY MASS SPECTROMETRY [LARGE SCALE ANALYSIS]</scope>
</reference>
<reference key="5">
    <citation type="journal article" date="2009" name="Sci. Signal.">
        <title>Quantitative phosphoproteomic analysis of T cell receptor signaling reveals system-wide modulation of protein-protein interactions.</title>
        <authorList>
            <person name="Mayya V."/>
            <person name="Lundgren D.H."/>
            <person name="Hwang S.-I."/>
            <person name="Rezaul K."/>
            <person name="Wu L."/>
            <person name="Eng J.K."/>
            <person name="Rodionov V."/>
            <person name="Han D.K."/>
        </authorList>
    </citation>
    <scope>PHOSPHORYLATION [LARGE SCALE ANALYSIS] AT SER-373 AND SER-376</scope>
    <scope>IDENTIFICATION BY MASS SPECTROMETRY [LARGE SCALE ANALYSIS]</scope>
    <source>
        <tissue>Leukemic T-cell</tissue>
    </source>
</reference>
<reference key="6">
    <citation type="journal article" date="2010" name="Sci. Signal.">
        <title>Quantitative phosphoproteomics reveals widespread full phosphorylation site occupancy during mitosis.</title>
        <authorList>
            <person name="Olsen J.V."/>
            <person name="Vermeulen M."/>
            <person name="Santamaria A."/>
            <person name="Kumar C."/>
            <person name="Miller M.L."/>
            <person name="Jensen L.J."/>
            <person name="Gnad F."/>
            <person name="Cox J."/>
            <person name="Jensen T.S."/>
            <person name="Nigg E.A."/>
            <person name="Brunak S."/>
            <person name="Mann M."/>
        </authorList>
    </citation>
    <scope>PHOSPHORYLATION [LARGE SCALE ANALYSIS] AT SER-373 AND SER-376</scope>
    <scope>IDENTIFICATION BY MASS SPECTROMETRY [LARGE SCALE ANALYSIS]</scope>
    <source>
        <tissue>Cervix carcinoma</tissue>
    </source>
</reference>
<reference key="7">
    <citation type="journal article" date="2011" name="Sci. Signal.">
        <title>System-wide temporal characterization of the proteome and phosphoproteome of human embryonic stem cell differentiation.</title>
        <authorList>
            <person name="Rigbolt K.T."/>
            <person name="Prokhorova T.A."/>
            <person name="Akimov V."/>
            <person name="Henningsen J."/>
            <person name="Johansen P.T."/>
            <person name="Kratchmarova I."/>
            <person name="Kassem M."/>
            <person name="Mann M."/>
            <person name="Olsen J.V."/>
            <person name="Blagoev B."/>
        </authorList>
    </citation>
    <scope>PHOSPHORYLATION [LARGE SCALE ANALYSIS] AT SER-373 AND SER-376</scope>
    <scope>IDENTIFICATION BY MASS SPECTROMETRY [LARGE SCALE ANALYSIS]</scope>
</reference>
<reference key="8">
    <citation type="journal article" date="2012" name="Proc. Natl. Acad. Sci. U.S.A.">
        <title>N-terminal acetylome analyses and functional insights of the N-terminal acetyltransferase NatB.</title>
        <authorList>
            <person name="Van Damme P."/>
            <person name="Lasa M."/>
            <person name="Polevoda B."/>
            <person name="Gazquez C."/>
            <person name="Elosegui-Artola A."/>
            <person name="Kim D.S."/>
            <person name="De Juan-Pardo E."/>
            <person name="Demeyer K."/>
            <person name="Hole K."/>
            <person name="Larrea E."/>
            <person name="Timmerman E."/>
            <person name="Prieto J."/>
            <person name="Arnesen T."/>
            <person name="Sherman F."/>
            <person name="Gevaert K."/>
            <person name="Aldabe R."/>
        </authorList>
    </citation>
    <scope>ACETYLATION [LARGE SCALE ANALYSIS] AT MET-1</scope>
    <scope>IDENTIFICATION BY MASS SPECTROMETRY [LARGE SCALE ANALYSIS]</scope>
</reference>
<reference key="9">
    <citation type="journal article" date="2013" name="J. Proteome Res.">
        <title>Toward a comprehensive characterization of a human cancer cell phosphoproteome.</title>
        <authorList>
            <person name="Zhou H."/>
            <person name="Di Palma S."/>
            <person name="Preisinger C."/>
            <person name="Peng M."/>
            <person name="Polat A.N."/>
            <person name="Heck A.J."/>
            <person name="Mohammed S."/>
        </authorList>
    </citation>
    <scope>PHOSPHORYLATION [LARGE SCALE ANALYSIS] AT SER-334; SER-336; SER-373; SER-376; SER-447 AND SER-473</scope>
    <scope>IDENTIFICATION BY MASS SPECTROMETRY [LARGE SCALE ANALYSIS]</scope>
    <source>
        <tissue>Erythroleukemia</tissue>
    </source>
</reference>
<reference key="10">
    <citation type="journal article" date="2014" name="J. Proteomics">
        <title>An enzyme assisted RP-RPLC approach for in-depth analysis of human liver phosphoproteome.</title>
        <authorList>
            <person name="Bian Y."/>
            <person name="Song C."/>
            <person name="Cheng K."/>
            <person name="Dong M."/>
            <person name="Wang F."/>
            <person name="Huang J."/>
            <person name="Sun D."/>
            <person name="Wang L."/>
            <person name="Ye M."/>
            <person name="Zou H."/>
        </authorList>
    </citation>
    <scope>PHOSPHORYLATION [LARGE SCALE ANALYSIS] AT THR-285; SER-373 AND SER-376</scope>
    <scope>IDENTIFICATION BY MASS SPECTROMETRY [LARGE SCALE ANALYSIS]</scope>
    <source>
        <tissue>Liver</tissue>
    </source>
</reference>
<reference key="11">
    <citation type="journal article" date="2018" name="Mol. Biol. Cell">
        <title>Ccdc61 controls centrosomal localization of Cep170 and is required for spindle assembly and symmetry.</title>
        <authorList>
            <person name="Baerenz F."/>
            <person name="Kschonsak Y.T."/>
            <person name="Meyer A."/>
            <person name="Jafarpour A."/>
            <person name="Lorenz H."/>
            <person name="Hoffmann I."/>
        </authorList>
    </citation>
    <scope>FUNCTION</scope>
    <scope>INTERACTION WITH CEP170</scope>
    <scope>SUBCELLULAR LOCATION</scope>
</reference>
<reference key="12">
    <citation type="journal article" date="2020" name="Biol. Cell">
        <title>hVFL3/CCDC61 is a component of mother centriole subdistal appendages required for centrosome cohesion and positioning.</title>
        <authorList>
            <person name="Pizon V."/>
            <person name="Gaudin N."/>
            <person name="Poteau M."/>
            <person name="Cifuentes-Diaz C."/>
            <person name="Demdou R."/>
            <person name="Heyer V."/>
            <person name="Reina San Martin B."/>
            <person name="Azimzadeh J."/>
        </authorList>
    </citation>
    <scope>FUNCTION</scope>
    <scope>INTERACTION WITH CEP131; CEP170 AND PCM1</scope>
    <scope>SUBCELLULAR LOCATION</scope>
</reference>
<reference key="13">
    <citation type="journal article" date="2020" name="Structure">
        <title>CCDC61/VFL3 Is a Paralog of SAS6 and Promotes Ciliary Functions.</title>
        <authorList>
            <person name="Ochi T."/>
            <person name="Quarantotti V."/>
            <person name="Lin H."/>
            <person name="Jullien J."/>
            <person name="Rosa e Silva I."/>
            <person name="Boselli F."/>
            <person name="Barnabas D.D."/>
            <person name="Johnson C.M."/>
            <person name="McLaughlin S.H."/>
            <person name="Freund S.M.V."/>
            <person name="Blackford A.N."/>
            <person name="Kimata Y."/>
            <person name="Goldstein R.E."/>
            <person name="Jackson S.P."/>
            <person name="Blundell T.L."/>
            <person name="Dutcher S.K."/>
            <person name="Gergely F."/>
            <person name="van Breugel M."/>
        </authorList>
    </citation>
    <scope>X-RAY CRYSTALLOGRAPHY (2.55 ANGSTROMS) OF 1-143</scope>
    <scope>FUNCTION</scope>
    <scope>SUBCELLULAR LOCATION</scope>
    <scope>SUBUNIT</scope>
    <scope>DOMAIN</scope>
    <scope>MUTAGENESIS OF 128-PHE-ASP-129; LYS-259; ARG-263; ARG-266; ARG-268 AND LYS-270</scope>
</reference>
<protein>
    <recommendedName>
        <fullName evidence="6">Centrosomal protein CCDC61</fullName>
    </recommendedName>
    <alternativeName>
        <fullName>Coiled-coil domain-containing protein 61</fullName>
    </alternativeName>
    <alternativeName>
        <fullName evidence="7 8">VFL3 homolog</fullName>
    </alternativeName>
</protein>